<reference key="1">
    <citation type="journal article" date="2004" name="Proc. Natl. Acad. Sci. U.S.A.">
        <title>Structural flexibility in the Burkholderia mallei genome.</title>
        <authorList>
            <person name="Nierman W.C."/>
            <person name="DeShazer D."/>
            <person name="Kim H.S."/>
            <person name="Tettelin H."/>
            <person name="Nelson K.E."/>
            <person name="Feldblyum T.V."/>
            <person name="Ulrich R.L."/>
            <person name="Ronning C.M."/>
            <person name="Brinkac L.M."/>
            <person name="Daugherty S.C."/>
            <person name="Davidsen T.D."/>
            <person name="DeBoy R.T."/>
            <person name="Dimitrov G."/>
            <person name="Dodson R.J."/>
            <person name="Durkin A.S."/>
            <person name="Gwinn M.L."/>
            <person name="Haft D.H."/>
            <person name="Khouri H.M."/>
            <person name="Kolonay J.F."/>
            <person name="Madupu R."/>
            <person name="Mohammoud Y."/>
            <person name="Nelson W.C."/>
            <person name="Radune D."/>
            <person name="Romero C.M."/>
            <person name="Sarria S."/>
            <person name="Selengut J."/>
            <person name="Shamblin C."/>
            <person name="Sullivan S.A."/>
            <person name="White O."/>
            <person name="Yu Y."/>
            <person name="Zafar N."/>
            <person name="Zhou L."/>
            <person name="Fraser C.M."/>
        </authorList>
    </citation>
    <scope>NUCLEOTIDE SEQUENCE [LARGE SCALE GENOMIC DNA]</scope>
    <source>
        <strain>ATCC 23344</strain>
    </source>
</reference>
<gene>
    <name evidence="1" type="primary">minC</name>
    <name type="ordered locus">BMA2113</name>
</gene>
<proteinExistence type="inferred from homology"/>
<accession>Q62HY5</accession>
<organism>
    <name type="scientific">Burkholderia mallei (strain ATCC 23344)</name>
    <dbReference type="NCBI Taxonomy" id="243160"/>
    <lineage>
        <taxon>Bacteria</taxon>
        <taxon>Pseudomonadati</taxon>
        <taxon>Pseudomonadota</taxon>
        <taxon>Betaproteobacteria</taxon>
        <taxon>Burkholderiales</taxon>
        <taxon>Burkholderiaceae</taxon>
        <taxon>Burkholderia</taxon>
        <taxon>pseudomallei group</taxon>
    </lineage>
</organism>
<feature type="chain" id="PRO_1000047812" description="Probable septum site-determining protein MinC">
    <location>
        <begin position="1"/>
        <end position="270"/>
    </location>
</feature>
<feature type="region of interest" description="Disordered" evidence="2">
    <location>
        <begin position="105"/>
        <end position="129"/>
    </location>
</feature>
<feature type="compositionally biased region" description="Low complexity" evidence="2">
    <location>
        <begin position="116"/>
        <end position="129"/>
    </location>
</feature>
<evidence type="ECO:0000255" key="1">
    <source>
        <dbReference type="HAMAP-Rule" id="MF_00267"/>
    </source>
</evidence>
<evidence type="ECO:0000256" key="2">
    <source>
        <dbReference type="SAM" id="MobiDB-lite"/>
    </source>
</evidence>
<keyword id="KW-0131">Cell cycle</keyword>
<keyword id="KW-0132">Cell division</keyword>
<keyword id="KW-1185">Reference proteome</keyword>
<keyword id="KW-0717">Septation</keyword>
<protein>
    <recommendedName>
        <fullName evidence="1">Probable septum site-determining protein MinC</fullName>
    </recommendedName>
</protein>
<name>MINC_BURMA</name>
<sequence>MSLKKSPFFELRSGSVDTLLFIVKTADLDALRAELVKRFEATPEFFADDVVAIDVRRLADHERVPLDDIRGMLNDVRMRVIGVVAQPEQHAWAASAGLPLLEARDRRAPSSKAADEAPVQQAEPAAPAAGQAALFEQAGPTLADAGAPPESPAPAVAAQSATLVVDRPLHSGQQIYAKGDLVVLGPVSYGAEVIAEGNIHIYAPLRGRALAGVHGNHDARIFCTCLEPELISIAGIYRTTENPLPADVLGKSVQIRLEQEKLMIEPLRLT</sequence>
<dbReference type="EMBL" id="CP000010">
    <property type="protein sequence ID" value="AAU50001.1"/>
    <property type="molecule type" value="Genomic_DNA"/>
</dbReference>
<dbReference type="RefSeq" id="WP_004186698.1">
    <property type="nucleotide sequence ID" value="NC_006348.1"/>
</dbReference>
<dbReference type="RefSeq" id="YP_103685.1">
    <property type="nucleotide sequence ID" value="NC_006348.1"/>
</dbReference>
<dbReference type="SMR" id="Q62HY5"/>
<dbReference type="GeneID" id="92979820"/>
<dbReference type="KEGG" id="bma:BMA2113"/>
<dbReference type="PATRIC" id="fig|243160.12.peg.2182"/>
<dbReference type="eggNOG" id="COG0850">
    <property type="taxonomic scope" value="Bacteria"/>
</dbReference>
<dbReference type="HOGENOM" id="CLU_067812_0_0_4"/>
<dbReference type="Proteomes" id="UP000006693">
    <property type="component" value="Chromosome 1"/>
</dbReference>
<dbReference type="GO" id="GO:0000902">
    <property type="term" value="P:cell morphogenesis"/>
    <property type="evidence" value="ECO:0007669"/>
    <property type="project" value="InterPro"/>
</dbReference>
<dbReference type="GO" id="GO:0000917">
    <property type="term" value="P:division septum assembly"/>
    <property type="evidence" value="ECO:0007669"/>
    <property type="project" value="UniProtKB-KW"/>
</dbReference>
<dbReference type="GO" id="GO:0051302">
    <property type="term" value="P:regulation of cell division"/>
    <property type="evidence" value="ECO:0007669"/>
    <property type="project" value="InterPro"/>
</dbReference>
<dbReference type="GO" id="GO:1901891">
    <property type="term" value="P:regulation of cell septum assembly"/>
    <property type="evidence" value="ECO:0007669"/>
    <property type="project" value="InterPro"/>
</dbReference>
<dbReference type="Gene3D" id="2.160.20.70">
    <property type="match status" value="1"/>
</dbReference>
<dbReference type="Gene3D" id="3.30.70.260">
    <property type="match status" value="1"/>
</dbReference>
<dbReference type="HAMAP" id="MF_00267">
    <property type="entry name" value="MinC"/>
    <property type="match status" value="1"/>
</dbReference>
<dbReference type="InterPro" id="IPR016098">
    <property type="entry name" value="CAP/MinC_C"/>
</dbReference>
<dbReference type="InterPro" id="IPR013033">
    <property type="entry name" value="MinC"/>
</dbReference>
<dbReference type="InterPro" id="IPR036145">
    <property type="entry name" value="MinC_C_sf"/>
</dbReference>
<dbReference type="InterPro" id="IPR007874">
    <property type="entry name" value="MinC_N"/>
</dbReference>
<dbReference type="InterPro" id="IPR005526">
    <property type="entry name" value="Septum_form_inhib_MinC_C"/>
</dbReference>
<dbReference type="NCBIfam" id="TIGR01222">
    <property type="entry name" value="minC"/>
    <property type="match status" value="1"/>
</dbReference>
<dbReference type="PANTHER" id="PTHR34108">
    <property type="entry name" value="SEPTUM SITE-DETERMINING PROTEIN MINC"/>
    <property type="match status" value="1"/>
</dbReference>
<dbReference type="PANTHER" id="PTHR34108:SF1">
    <property type="entry name" value="SEPTUM SITE-DETERMINING PROTEIN MINC"/>
    <property type="match status" value="1"/>
</dbReference>
<dbReference type="Pfam" id="PF03775">
    <property type="entry name" value="MinC_C"/>
    <property type="match status" value="1"/>
</dbReference>
<dbReference type="Pfam" id="PF05209">
    <property type="entry name" value="MinC_N"/>
    <property type="match status" value="1"/>
</dbReference>
<dbReference type="SUPFAM" id="SSF63848">
    <property type="entry name" value="Cell-division inhibitor MinC, C-terminal domain"/>
    <property type="match status" value="1"/>
</dbReference>
<comment type="function">
    <text evidence="1">Cell division inhibitor that blocks the formation of polar Z ring septums. Rapidly oscillates between the poles of the cell to destabilize FtsZ filaments that have formed before they mature into polar Z rings. Prevents FtsZ polymerization.</text>
</comment>
<comment type="subunit">
    <text evidence="1">Interacts with MinD and FtsZ.</text>
</comment>
<comment type="similarity">
    <text evidence="1">Belongs to the MinC family.</text>
</comment>